<reference key="1">
    <citation type="submission" date="2008-04" db="EMBL/GenBank/DDBJ databases">
        <title>Complete sequence of chromosome of Natranaerobius thermophilus JW/NM-WN-LF.</title>
        <authorList>
            <consortium name="US DOE Joint Genome Institute"/>
            <person name="Copeland A."/>
            <person name="Lucas S."/>
            <person name="Lapidus A."/>
            <person name="Glavina del Rio T."/>
            <person name="Dalin E."/>
            <person name="Tice H."/>
            <person name="Bruce D."/>
            <person name="Goodwin L."/>
            <person name="Pitluck S."/>
            <person name="Chertkov O."/>
            <person name="Brettin T."/>
            <person name="Detter J.C."/>
            <person name="Han C."/>
            <person name="Kuske C.R."/>
            <person name="Schmutz J."/>
            <person name="Larimer F."/>
            <person name="Land M."/>
            <person name="Hauser L."/>
            <person name="Kyrpides N."/>
            <person name="Lykidis A."/>
            <person name="Mesbah N.M."/>
            <person name="Wiegel J."/>
        </authorList>
    </citation>
    <scope>NUCLEOTIDE SEQUENCE [LARGE SCALE GENOMIC DNA]</scope>
    <source>
        <strain>ATCC BAA-1301 / DSM 18059 / JW/NM-WN-LF</strain>
    </source>
</reference>
<dbReference type="EC" id="2.1.3.2" evidence="1"/>
<dbReference type="EMBL" id="CP001034">
    <property type="protein sequence ID" value="ACB86315.1"/>
    <property type="molecule type" value="Genomic_DNA"/>
</dbReference>
<dbReference type="RefSeq" id="WP_012449149.1">
    <property type="nucleotide sequence ID" value="NC_010718.1"/>
</dbReference>
<dbReference type="SMR" id="B2A2U7"/>
<dbReference type="FunCoup" id="B2A2U7">
    <property type="interactions" value="427"/>
</dbReference>
<dbReference type="STRING" id="457570.Nther_2765"/>
<dbReference type="KEGG" id="nth:Nther_2765"/>
<dbReference type="eggNOG" id="COG0540">
    <property type="taxonomic scope" value="Bacteria"/>
</dbReference>
<dbReference type="HOGENOM" id="CLU_043846_2_0_9"/>
<dbReference type="InParanoid" id="B2A2U7"/>
<dbReference type="OrthoDB" id="9802587at2"/>
<dbReference type="UniPathway" id="UPA00070">
    <property type="reaction ID" value="UER00116"/>
</dbReference>
<dbReference type="Proteomes" id="UP000001683">
    <property type="component" value="Chromosome"/>
</dbReference>
<dbReference type="GO" id="GO:0005829">
    <property type="term" value="C:cytosol"/>
    <property type="evidence" value="ECO:0007669"/>
    <property type="project" value="TreeGrafter"/>
</dbReference>
<dbReference type="GO" id="GO:0016597">
    <property type="term" value="F:amino acid binding"/>
    <property type="evidence" value="ECO:0007669"/>
    <property type="project" value="InterPro"/>
</dbReference>
<dbReference type="GO" id="GO:0004070">
    <property type="term" value="F:aspartate carbamoyltransferase activity"/>
    <property type="evidence" value="ECO:0007669"/>
    <property type="project" value="UniProtKB-UniRule"/>
</dbReference>
<dbReference type="GO" id="GO:0006207">
    <property type="term" value="P:'de novo' pyrimidine nucleobase biosynthetic process"/>
    <property type="evidence" value="ECO:0007669"/>
    <property type="project" value="InterPro"/>
</dbReference>
<dbReference type="GO" id="GO:0044205">
    <property type="term" value="P:'de novo' UMP biosynthetic process"/>
    <property type="evidence" value="ECO:0007669"/>
    <property type="project" value="UniProtKB-UniRule"/>
</dbReference>
<dbReference type="GO" id="GO:0006520">
    <property type="term" value="P:amino acid metabolic process"/>
    <property type="evidence" value="ECO:0007669"/>
    <property type="project" value="InterPro"/>
</dbReference>
<dbReference type="FunFam" id="3.40.50.1370:FF:000007">
    <property type="entry name" value="Aspartate carbamoyltransferase"/>
    <property type="match status" value="1"/>
</dbReference>
<dbReference type="Gene3D" id="3.40.50.1370">
    <property type="entry name" value="Aspartate/ornithine carbamoyltransferase"/>
    <property type="match status" value="2"/>
</dbReference>
<dbReference type="HAMAP" id="MF_00001">
    <property type="entry name" value="Asp_carb_tr"/>
    <property type="match status" value="1"/>
</dbReference>
<dbReference type="InterPro" id="IPR006132">
    <property type="entry name" value="Asp/Orn_carbamoyltranf_P-bd"/>
</dbReference>
<dbReference type="InterPro" id="IPR006130">
    <property type="entry name" value="Asp/Orn_carbamoylTrfase"/>
</dbReference>
<dbReference type="InterPro" id="IPR036901">
    <property type="entry name" value="Asp/Orn_carbamoylTrfase_sf"/>
</dbReference>
<dbReference type="InterPro" id="IPR002082">
    <property type="entry name" value="Asp_carbamoyltransf"/>
</dbReference>
<dbReference type="InterPro" id="IPR006131">
    <property type="entry name" value="Asp_carbamoyltransf_Asp/Orn-bd"/>
</dbReference>
<dbReference type="NCBIfam" id="TIGR00670">
    <property type="entry name" value="asp_carb_tr"/>
    <property type="match status" value="1"/>
</dbReference>
<dbReference type="NCBIfam" id="NF002032">
    <property type="entry name" value="PRK00856.1"/>
    <property type="match status" value="1"/>
</dbReference>
<dbReference type="PANTHER" id="PTHR45753:SF6">
    <property type="entry name" value="ASPARTATE CARBAMOYLTRANSFERASE"/>
    <property type="match status" value="1"/>
</dbReference>
<dbReference type="PANTHER" id="PTHR45753">
    <property type="entry name" value="ORNITHINE CARBAMOYLTRANSFERASE, MITOCHONDRIAL"/>
    <property type="match status" value="1"/>
</dbReference>
<dbReference type="Pfam" id="PF00185">
    <property type="entry name" value="OTCace"/>
    <property type="match status" value="1"/>
</dbReference>
<dbReference type="Pfam" id="PF02729">
    <property type="entry name" value="OTCace_N"/>
    <property type="match status" value="1"/>
</dbReference>
<dbReference type="PRINTS" id="PR00100">
    <property type="entry name" value="AOTCASE"/>
</dbReference>
<dbReference type="PRINTS" id="PR00101">
    <property type="entry name" value="ATCASE"/>
</dbReference>
<dbReference type="SUPFAM" id="SSF53671">
    <property type="entry name" value="Aspartate/ornithine carbamoyltransferase"/>
    <property type="match status" value="1"/>
</dbReference>
<dbReference type="PROSITE" id="PS00097">
    <property type="entry name" value="CARBAMOYLTRANSFERASE"/>
    <property type="match status" value="1"/>
</dbReference>
<proteinExistence type="inferred from homology"/>
<organism>
    <name type="scientific">Natranaerobius thermophilus (strain ATCC BAA-1301 / DSM 18059 / JW/NM-WN-LF)</name>
    <dbReference type="NCBI Taxonomy" id="457570"/>
    <lineage>
        <taxon>Bacteria</taxon>
        <taxon>Bacillati</taxon>
        <taxon>Bacillota</taxon>
        <taxon>Clostridia</taxon>
        <taxon>Natranaerobiales</taxon>
        <taxon>Natranaerobiaceae</taxon>
        <taxon>Natranaerobius</taxon>
    </lineage>
</organism>
<keyword id="KW-0665">Pyrimidine biosynthesis</keyword>
<keyword id="KW-1185">Reference proteome</keyword>
<keyword id="KW-0808">Transferase</keyword>
<protein>
    <recommendedName>
        <fullName evidence="1">Aspartate carbamoyltransferase catalytic subunit</fullName>
        <ecNumber evidence="1">2.1.3.2</ecNumber>
    </recommendedName>
    <alternativeName>
        <fullName evidence="1">Aspartate transcarbamylase</fullName>
        <shortName evidence="1">ATCase</shortName>
    </alternativeName>
</protein>
<feature type="chain" id="PRO_1000088780" description="Aspartate carbamoyltransferase catalytic subunit">
    <location>
        <begin position="1"/>
        <end position="313"/>
    </location>
</feature>
<feature type="binding site" evidence="1">
    <location>
        <position position="58"/>
    </location>
    <ligand>
        <name>carbamoyl phosphate</name>
        <dbReference type="ChEBI" id="CHEBI:58228"/>
    </ligand>
</feature>
<feature type="binding site" evidence="1">
    <location>
        <position position="59"/>
    </location>
    <ligand>
        <name>carbamoyl phosphate</name>
        <dbReference type="ChEBI" id="CHEBI:58228"/>
    </ligand>
</feature>
<feature type="binding site" evidence="1">
    <location>
        <position position="86"/>
    </location>
    <ligand>
        <name>L-aspartate</name>
        <dbReference type="ChEBI" id="CHEBI:29991"/>
    </ligand>
</feature>
<feature type="binding site" evidence="1">
    <location>
        <position position="108"/>
    </location>
    <ligand>
        <name>carbamoyl phosphate</name>
        <dbReference type="ChEBI" id="CHEBI:58228"/>
    </ligand>
</feature>
<feature type="binding site" evidence="1">
    <location>
        <position position="136"/>
    </location>
    <ligand>
        <name>carbamoyl phosphate</name>
        <dbReference type="ChEBI" id="CHEBI:58228"/>
    </ligand>
</feature>
<feature type="binding site" evidence="1">
    <location>
        <position position="139"/>
    </location>
    <ligand>
        <name>carbamoyl phosphate</name>
        <dbReference type="ChEBI" id="CHEBI:58228"/>
    </ligand>
</feature>
<feature type="binding site" evidence="1">
    <location>
        <position position="169"/>
    </location>
    <ligand>
        <name>L-aspartate</name>
        <dbReference type="ChEBI" id="CHEBI:29991"/>
    </ligand>
</feature>
<feature type="binding site" evidence="1">
    <location>
        <position position="224"/>
    </location>
    <ligand>
        <name>L-aspartate</name>
        <dbReference type="ChEBI" id="CHEBI:29991"/>
    </ligand>
</feature>
<feature type="binding site" evidence="1">
    <location>
        <position position="265"/>
    </location>
    <ligand>
        <name>carbamoyl phosphate</name>
        <dbReference type="ChEBI" id="CHEBI:58228"/>
    </ligand>
</feature>
<feature type="binding site" evidence="1">
    <location>
        <position position="266"/>
    </location>
    <ligand>
        <name>carbamoyl phosphate</name>
        <dbReference type="ChEBI" id="CHEBI:58228"/>
    </ligand>
</feature>
<sequence>MGLQRKSLLGLKDMEKSEIESILDSTESMKEIVQRKNKKLPTLKGFSMVNLFYEPSTRTRSSFEMAGKYLGADTTNMSASASSVAKGENLIDTGKTLEAMGINLIVMRHPLAGAPRLLANNLSCSIINAGDGYHEHPTQALLDMFTIKEYKGSLKGLKVTIIGDIYHSRVARSNIWGLTKMGADVRLAGPPTLLDQRVFTEMGASCYYRVEDALADADVVMALRIQRERQGKTLLPSLREYARLYGINQERFKLAKKDALLLHPGPVNRGIELTSELMNSEKSVIEEQVTNGVAIRMALLYHLSGGEDNGDIA</sequence>
<name>PYRB_NATTJ</name>
<accession>B2A2U7</accession>
<evidence type="ECO:0000255" key="1">
    <source>
        <dbReference type="HAMAP-Rule" id="MF_00001"/>
    </source>
</evidence>
<gene>
    <name evidence="1" type="primary">pyrB</name>
    <name type="ordered locus">Nther_2765</name>
</gene>
<comment type="function">
    <text evidence="1">Catalyzes the condensation of carbamoyl phosphate and aspartate to form carbamoyl aspartate and inorganic phosphate, the committed step in the de novo pyrimidine nucleotide biosynthesis pathway.</text>
</comment>
<comment type="catalytic activity">
    <reaction evidence="1">
        <text>carbamoyl phosphate + L-aspartate = N-carbamoyl-L-aspartate + phosphate + H(+)</text>
        <dbReference type="Rhea" id="RHEA:20013"/>
        <dbReference type="ChEBI" id="CHEBI:15378"/>
        <dbReference type="ChEBI" id="CHEBI:29991"/>
        <dbReference type="ChEBI" id="CHEBI:32814"/>
        <dbReference type="ChEBI" id="CHEBI:43474"/>
        <dbReference type="ChEBI" id="CHEBI:58228"/>
        <dbReference type="EC" id="2.1.3.2"/>
    </reaction>
</comment>
<comment type="pathway">
    <text evidence="1">Pyrimidine metabolism; UMP biosynthesis via de novo pathway; (S)-dihydroorotate from bicarbonate: step 2/3.</text>
</comment>
<comment type="subunit">
    <text evidence="1">Heterododecamer (2C3:3R2) of six catalytic PyrB chains organized as two trimers (C3), and six regulatory PyrI chains organized as three dimers (R2).</text>
</comment>
<comment type="similarity">
    <text evidence="1">Belongs to the aspartate/ornithine carbamoyltransferase superfamily. ATCase family.</text>
</comment>